<dbReference type="EC" id="7.6.2.-" evidence="1"/>
<dbReference type="EMBL" id="BX571867">
    <property type="protein sequence ID" value="CAE15010.1"/>
    <property type="molecule type" value="Genomic_DNA"/>
</dbReference>
<dbReference type="RefSeq" id="WP_011146858.1">
    <property type="nucleotide sequence ID" value="NC_005126.1"/>
</dbReference>
<dbReference type="SMR" id="Q7N3S7"/>
<dbReference type="STRING" id="243265.plu2636"/>
<dbReference type="GeneID" id="48848899"/>
<dbReference type="KEGG" id="plu:plu2636"/>
<dbReference type="eggNOG" id="COG4559">
    <property type="taxonomic scope" value="Bacteria"/>
</dbReference>
<dbReference type="HOGENOM" id="CLU_000604_1_11_6"/>
<dbReference type="OrthoDB" id="5292475at2"/>
<dbReference type="Proteomes" id="UP000002514">
    <property type="component" value="Chromosome"/>
</dbReference>
<dbReference type="GO" id="GO:0005886">
    <property type="term" value="C:plasma membrane"/>
    <property type="evidence" value="ECO:0007669"/>
    <property type="project" value="UniProtKB-SubCell"/>
</dbReference>
<dbReference type="GO" id="GO:0005524">
    <property type="term" value="F:ATP binding"/>
    <property type="evidence" value="ECO:0007669"/>
    <property type="project" value="UniProtKB-KW"/>
</dbReference>
<dbReference type="GO" id="GO:0016887">
    <property type="term" value="F:ATP hydrolysis activity"/>
    <property type="evidence" value="ECO:0007669"/>
    <property type="project" value="InterPro"/>
</dbReference>
<dbReference type="CDD" id="cd03214">
    <property type="entry name" value="ABC_Iron-Siderophores_B12_Hemin"/>
    <property type="match status" value="1"/>
</dbReference>
<dbReference type="FunFam" id="3.40.50.300:FF:000134">
    <property type="entry name" value="Iron-enterobactin ABC transporter ATP-binding protein"/>
    <property type="match status" value="1"/>
</dbReference>
<dbReference type="Gene3D" id="3.40.50.300">
    <property type="entry name" value="P-loop containing nucleotide triphosphate hydrolases"/>
    <property type="match status" value="1"/>
</dbReference>
<dbReference type="InterPro" id="IPR003593">
    <property type="entry name" value="AAA+_ATPase"/>
</dbReference>
<dbReference type="InterPro" id="IPR003439">
    <property type="entry name" value="ABC_transporter-like_ATP-bd"/>
</dbReference>
<dbReference type="InterPro" id="IPR017871">
    <property type="entry name" value="ABC_transporter-like_CS"/>
</dbReference>
<dbReference type="InterPro" id="IPR027417">
    <property type="entry name" value="P-loop_NTPase"/>
</dbReference>
<dbReference type="NCBIfam" id="NF010068">
    <property type="entry name" value="PRK13548.1"/>
    <property type="match status" value="1"/>
</dbReference>
<dbReference type="PANTHER" id="PTHR42794">
    <property type="entry name" value="HEMIN IMPORT ATP-BINDING PROTEIN HMUV"/>
    <property type="match status" value="1"/>
</dbReference>
<dbReference type="PANTHER" id="PTHR42794:SF1">
    <property type="entry name" value="HEMIN IMPORT ATP-BINDING PROTEIN HMUV"/>
    <property type="match status" value="1"/>
</dbReference>
<dbReference type="Pfam" id="PF00005">
    <property type="entry name" value="ABC_tran"/>
    <property type="match status" value="1"/>
</dbReference>
<dbReference type="SMART" id="SM00382">
    <property type="entry name" value="AAA"/>
    <property type="match status" value="1"/>
</dbReference>
<dbReference type="SUPFAM" id="SSF52540">
    <property type="entry name" value="P-loop containing nucleoside triphosphate hydrolases"/>
    <property type="match status" value="1"/>
</dbReference>
<dbReference type="PROSITE" id="PS00211">
    <property type="entry name" value="ABC_TRANSPORTER_1"/>
    <property type="match status" value="1"/>
</dbReference>
<dbReference type="PROSITE" id="PS50893">
    <property type="entry name" value="ABC_TRANSPORTER_2"/>
    <property type="match status" value="1"/>
</dbReference>
<dbReference type="PROSITE" id="PS51261">
    <property type="entry name" value="HMUV"/>
    <property type="match status" value="1"/>
</dbReference>
<reference key="1">
    <citation type="journal article" date="2003" name="Nat. Biotechnol.">
        <title>The genome sequence of the entomopathogenic bacterium Photorhabdus luminescens.</title>
        <authorList>
            <person name="Duchaud E."/>
            <person name="Rusniok C."/>
            <person name="Frangeul L."/>
            <person name="Buchrieser C."/>
            <person name="Givaudan A."/>
            <person name="Taourit S."/>
            <person name="Bocs S."/>
            <person name="Boursaux-Eude C."/>
            <person name="Chandler M."/>
            <person name="Charles J.-F."/>
            <person name="Dassa E."/>
            <person name="Derose R."/>
            <person name="Derzelle S."/>
            <person name="Freyssinet G."/>
            <person name="Gaudriault S."/>
            <person name="Medigue C."/>
            <person name="Lanois A."/>
            <person name="Powell K."/>
            <person name="Siguier P."/>
            <person name="Vincent R."/>
            <person name="Wingate V."/>
            <person name="Zouine M."/>
            <person name="Glaser P."/>
            <person name="Boemare N."/>
            <person name="Danchin A."/>
            <person name="Kunst F."/>
        </authorList>
    </citation>
    <scope>NUCLEOTIDE SEQUENCE [LARGE SCALE GENOMIC DNA]</scope>
    <source>
        <strain>DSM 15139 / CIP 105565 / TT01</strain>
    </source>
</reference>
<protein>
    <recommendedName>
        <fullName evidence="1">Hemin import ATP-binding protein HmuV</fullName>
        <ecNumber evidence="1">7.6.2.-</ecNumber>
    </recommendedName>
</protein>
<keyword id="KW-0067">ATP-binding</keyword>
<keyword id="KW-0997">Cell inner membrane</keyword>
<keyword id="KW-1003">Cell membrane</keyword>
<keyword id="KW-0472">Membrane</keyword>
<keyword id="KW-0547">Nucleotide-binding</keyword>
<keyword id="KW-1185">Reference proteome</keyword>
<keyword id="KW-1278">Translocase</keyword>
<keyword id="KW-0813">Transport</keyword>
<evidence type="ECO:0000255" key="1">
    <source>
        <dbReference type="HAMAP-Rule" id="MF_01718"/>
    </source>
</evidence>
<accession>Q7N3S7</accession>
<organism>
    <name type="scientific">Photorhabdus laumondii subsp. laumondii (strain DSM 15139 / CIP 105565 / TT01)</name>
    <name type="common">Photorhabdus luminescens subsp. laumondii</name>
    <dbReference type="NCBI Taxonomy" id="243265"/>
    <lineage>
        <taxon>Bacteria</taxon>
        <taxon>Pseudomonadati</taxon>
        <taxon>Pseudomonadota</taxon>
        <taxon>Gammaproteobacteria</taxon>
        <taxon>Enterobacterales</taxon>
        <taxon>Morganellaceae</taxon>
        <taxon>Photorhabdus</taxon>
    </lineage>
</organism>
<name>HMUV_PHOLL</name>
<gene>
    <name evidence="1" type="primary">hmuV</name>
    <name type="ordered locus">plu2636</name>
</gene>
<comment type="function">
    <text evidence="1">Part of the ABC transporter complex HmuTUV involved in hemin import. Responsible for energy coupling to the transport system.</text>
</comment>
<comment type="subunit">
    <text evidence="1">The complex is composed of two ATP-binding proteins (HmuV), two transmembrane proteins (HmuU) and a solute-binding protein (HmuT).</text>
</comment>
<comment type="subcellular location">
    <subcellularLocation>
        <location evidence="1">Cell inner membrane</location>
        <topology evidence="1">Peripheral membrane protein</topology>
    </subcellularLocation>
</comment>
<comment type="similarity">
    <text evidence="1">Belongs to the ABC transporter superfamily. Heme (hemin) importer (TC 3.A.1.14.5) family.</text>
</comment>
<feature type="chain" id="PRO_0000269606" description="Hemin import ATP-binding protein HmuV">
    <location>
        <begin position="1"/>
        <end position="264"/>
    </location>
</feature>
<feature type="domain" description="ABC transporter" evidence="1">
    <location>
        <begin position="10"/>
        <end position="246"/>
    </location>
</feature>
<feature type="binding site" evidence="1">
    <location>
        <begin position="42"/>
        <end position="49"/>
    </location>
    <ligand>
        <name>ATP</name>
        <dbReference type="ChEBI" id="CHEBI:30616"/>
    </ligand>
</feature>
<proteinExistence type="inferred from homology"/>
<sequence>MNAIKNNISLQAQNLSYSIGNQKIIDNVSLSVNKGEIVAIIGPNGAGKSTLLRLLTGYIKPEHGQCDLHGTPIEQWPAEQLARTRAVMRQHSSLSFPFSVEEVVAMGRSPHGIHHKQTAIDTVIEQTDCQALRHRDYRQLSGGEQQRVQLARVLAQLWHPTPIECCLFLDEPTSALDLYHQQHTLRLLYRLTREQPMAMCCVLHDLNLAALYADKIFLLHKGKLVAAGTPEEVLNDHTLRKWYQADLGITRHPETQQPQIYLRQ</sequence>